<accession>Q252V8</accession>
<evidence type="ECO:0000255" key="1">
    <source>
        <dbReference type="HAMAP-Rule" id="MF_01331"/>
    </source>
</evidence>
<evidence type="ECO:0000305" key="2"/>
<gene>
    <name evidence="1" type="primary">rplV</name>
    <name type="ordered locus">CF0908</name>
</gene>
<dbReference type="EMBL" id="AP006861">
    <property type="protein sequence ID" value="BAE81680.1"/>
    <property type="molecule type" value="Genomic_DNA"/>
</dbReference>
<dbReference type="RefSeq" id="WP_011458453.1">
    <property type="nucleotide sequence ID" value="NC_007899.1"/>
</dbReference>
<dbReference type="SMR" id="Q252V8"/>
<dbReference type="STRING" id="264202.CF0908"/>
<dbReference type="KEGG" id="cfe:CF0908"/>
<dbReference type="eggNOG" id="COG0091">
    <property type="taxonomic scope" value="Bacteria"/>
</dbReference>
<dbReference type="HOGENOM" id="CLU_083987_3_3_0"/>
<dbReference type="OrthoDB" id="9805969at2"/>
<dbReference type="Proteomes" id="UP000001260">
    <property type="component" value="Chromosome"/>
</dbReference>
<dbReference type="GO" id="GO:0022625">
    <property type="term" value="C:cytosolic large ribosomal subunit"/>
    <property type="evidence" value="ECO:0007669"/>
    <property type="project" value="TreeGrafter"/>
</dbReference>
<dbReference type="GO" id="GO:0019843">
    <property type="term" value="F:rRNA binding"/>
    <property type="evidence" value="ECO:0007669"/>
    <property type="project" value="UniProtKB-UniRule"/>
</dbReference>
<dbReference type="GO" id="GO:0003735">
    <property type="term" value="F:structural constituent of ribosome"/>
    <property type="evidence" value="ECO:0007669"/>
    <property type="project" value="InterPro"/>
</dbReference>
<dbReference type="GO" id="GO:0006412">
    <property type="term" value="P:translation"/>
    <property type="evidence" value="ECO:0007669"/>
    <property type="project" value="UniProtKB-UniRule"/>
</dbReference>
<dbReference type="Gene3D" id="3.90.470.10">
    <property type="entry name" value="Ribosomal protein L22/L17"/>
    <property type="match status" value="1"/>
</dbReference>
<dbReference type="HAMAP" id="MF_01331_B">
    <property type="entry name" value="Ribosomal_uL22_B"/>
    <property type="match status" value="1"/>
</dbReference>
<dbReference type="InterPro" id="IPR001063">
    <property type="entry name" value="Ribosomal_uL22"/>
</dbReference>
<dbReference type="InterPro" id="IPR005727">
    <property type="entry name" value="Ribosomal_uL22_bac/chlpt-type"/>
</dbReference>
<dbReference type="InterPro" id="IPR047867">
    <property type="entry name" value="Ribosomal_uL22_bac/org-type"/>
</dbReference>
<dbReference type="InterPro" id="IPR036394">
    <property type="entry name" value="Ribosomal_uL22_sf"/>
</dbReference>
<dbReference type="NCBIfam" id="TIGR01044">
    <property type="entry name" value="rplV_bact"/>
    <property type="match status" value="1"/>
</dbReference>
<dbReference type="PANTHER" id="PTHR13501">
    <property type="entry name" value="CHLOROPLAST 50S RIBOSOMAL PROTEIN L22-RELATED"/>
    <property type="match status" value="1"/>
</dbReference>
<dbReference type="PANTHER" id="PTHR13501:SF8">
    <property type="entry name" value="LARGE RIBOSOMAL SUBUNIT PROTEIN UL22M"/>
    <property type="match status" value="1"/>
</dbReference>
<dbReference type="Pfam" id="PF00237">
    <property type="entry name" value="Ribosomal_L22"/>
    <property type="match status" value="1"/>
</dbReference>
<dbReference type="SUPFAM" id="SSF54843">
    <property type="entry name" value="Ribosomal protein L22"/>
    <property type="match status" value="1"/>
</dbReference>
<name>RL22_CHLFF</name>
<organism>
    <name type="scientific">Chlamydia felis (strain Fe/C-56)</name>
    <name type="common">Chlamydophila felis</name>
    <dbReference type="NCBI Taxonomy" id="264202"/>
    <lineage>
        <taxon>Bacteria</taxon>
        <taxon>Pseudomonadati</taxon>
        <taxon>Chlamydiota</taxon>
        <taxon>Chlamydiia</taxon>
        <taxon>Chlamydiales</taxon>
        <taxon>Chlamydiaceae</taxon>
        <taxon>Chlamydia/Chlamydophila group</taxon>
        <taxon>Chlamydia</taxon>
    </lineage>
</organism>
<proteinExistence type="inferred from homology"/>
<sequence>MFKATARYIRVQPRKARLAAGLMRNLSVMEAQKQLSFSQLKAGRCLKKVLDSAVANAELNENVKREQLNVIEVRVDAGPVYKRTKSKSRGGRSPILKRTSHLTVIVGERER</sequence>
<comment type="function">
    <text evidence="1">This protein binds specifically to 23S rRNA; its binding is stimulated by other ribosomal proteins, e.g. L4, L17, and L20. It is important during the early stages of 50S assembly. It makes multiple contacts with different domains of the 23S rRNA in the assembled 50S subunit and ribosome (By similarity).</text>
</comment>
<comment type="function">
    <text evidence="1">The globular domain of the protein is located near the polypeptide exit tunnel on the outside of the subunit, while an extended beta-hairpin is found that lines the wall of the exit tunnel in the center of the 70S ribosome.</text>
</comment>
<comment type="subunit">
    <text evidence="1">Part of the 50S ribosomal subunit.</text>
</comment>
<comment type="similarity">
    <text evidence="1">Belongs to the universal ribosomal protein uL22 family.</text>
</comment>
<keyword id="KW-0687">Ribonucleoprotein</keyword>
<keyword id="KW-0689">Ribosomal protein</keyword>
<keyword id="KW-0694">RNA-binding</keyword>
<keyword id="KW-0699">rRNA-binding</keyword>
<reference key="1">
    <citation type="journal article" date="2006" name="DNA Res.">
        <title>Genome sequence of the cat pathogen, Chlamydophila felis.</title>
        <authorList>
            <person name="Azuma Y."/>
            <person name="Hirakawa H."/>
            <person name="Yamashita A."/>
            <person name="Cai Y."/>
            <person name="Rahman M.A."/>
            <person name="Suzuki H."/>
            <person name="Mitaku S."/>
            <person name="Toh H."/>
            <person name="Goto S."/>
            <person name="Murakami T."/>
            <person name="Sugi K."/>
            <person name="Hayashi H."/>
            <person name="Fukushi H."/>
            <person name="Hattori M."/>
            <person name="Kuhara S."/>
            <person name="Shirai M."/>
        </authorList>
    </citation>
    <scope>NUCLEOTIDE SEQUENCE [LARGE SCALE GENOMIC DNA]</scope>
    <source>
        <strain>Fe/C-56</strain>
    </source>
</reference>
<feature type="chain" id="PRO_0000243139" description="Large ribosomal subunit protein uL22">
    <location>
        <begin position="1"/>
        <end position="111"/>
    </location>
</feature>
<protein>
    <recommendedName>
        <fullName evidence="1">Large ribosomal subunit protein uL22</fullName>
    </recommendedName>
    <alternativeName>
        <fullName evidence="2">50S ribosomal protein L22</fullName>
    </alternativeName>
</protein>